<comment type="subcellular location">
    <subcellularLocation>
        <location evidence="1">Cell membrane</location>
        <topology evidence="1">Multi-pass membrane protein</topology>
    </subcellularLocation>
</comment>
<comment type="similarity">
    <text evidence="1">Belongs to the UPF0756 family.</text>
</comment>
<name>Y2884_YERPB</name>
<accession>B2K990</accession>
<reference key="1">
    <citation type="submission" date="2008-04" db="EMBL/GenBank/DDBJ databases">
        <title>Complete sequence of Yersinia pseudotuberculosis PB1/+.</title>
        <authorList>
            <person name="Copeland A."/>
            <person name="Lucas S."/>
            <person name="Lapidus A."/>
            <person name="Glavina del Rio T."/>
            <person name="Dalin E."/>
            <person name="Tice H."/>
            <person name="Bruce D."/>
            <person name="Goodwin L."/>
            <person name="Pitluck S."/>
            <person name="Munk A.C."/>
            <person name="Brettin T."/>
            <person name="Detter J.C."/>
            <person name="Han C."/>
            <person name="Tapia R."/>
            <person name="Schmutz J."/>
            <person name="Larimer F."/>
            <person name="Land M."/>
            <person name="Hauser L."/>
            <person name="Challacombe J.F."/>
            <person name="Green L."/>
            <person name="Lindler L.E."/>
            <person name="Nikolich M.P."/>
            <person name="Richardson P."/>
        </authorList>
    </citation>
    <scope>NUCLEOTIDE SEQUENCE [LARGE SCALE GENOMIC DNA]</scope>
    <source>
        <strain>PB1/+</strain>
    </source>
</reference>
<gene>
    <name type="ordered locus">YPTS_2884</name>
</gene>
<sequence length="150" mass="15409">MAALDPTLLILLALAALGILSHNMTVTLAILILIAIRITPLNSFFPWVEKYGLTIGVLILTIGVMAPIASGKISASEVLHSFVQWKSILAIVVGVAVSWLGGRGVSLMTHQPSVVAGLLVGTVLGVALFKGVPVGPLIAAGLLSLVIGKS</sequence>
<evidence type="ECO:0000255" key="1">
    <source>
        <dbReference type="HAMAP-Rule" id="MF_01874"/>
    </source>
</evidence>
<feature type="chain" id="PRO_5000345929" description="UPF0756 membrane protein YPTS_2884">
    <location>
        <begin position="1"/>
        <end position="150"/>
    </location>
</feature>
<feature type="transmembrane region" description="Helical" evidence="1">
    <location>
        <begin position="16"/>
        <end position="36"/>
    </location>
</feature>
<feature type="transmembrane region" description="Helical" evidence="1">
    <location>
        <begin position="51"/>
        <end position="71"/>
    </location>
</feature>
<feature type="transmembrane region" description="Helical" evidence="1">
    <location>
        <begin position="88"/>
        <end position="108"/>
    </location>
</feature>
<feature type="transmembrane region" description="Helical" evidence="1">
    <location>
        <begin position="114"/>
        <end position="134"/>
    </location>
</feature>
<dbReference type="EMBL" id="CP001048">
    <property type="protein sequence ID" value="ACC89841.1"/>
    <property type="molecule type" value="Genomic_DNA"/>
</dbReference>
<dbReference type="RefSeq" id="WP_002208553.1">
    <property type="nucleotide sequence ID" value="NZ_CP009780.1"/>
</dbReference>
<dbReference type="KEGG" id="ypb:YPTS_2884"/>
<dbReference type="PATRIC" id="fig|502801.10.peg.2313"/>
<dbReference type="GO" id="GO:0005886">
    <property type="term" value="C:plasma membrane"/>
    <property type="evidence" value="ECO:0007669"/>
    <property type="project" value="UniProtKB-SubCell"/>
</dbReference>
<dbReference type="HAMAP" id="MF_01874">
    <property type="entry name" value="UPF0756"/>
    <property type="match status" value="1"/>
</dbReference>
<dbReference type="InterPro" id="IPR007382">
    <property type="entry name" value="UPF0756_TM"/>
</dbReference>
<dbReference type="PANTHER" id="PTHR38452">
    <property type="entry name" value="UPF0756 MEMBRANE PROTEIN YEAL"/>
    <property type="match status" value="1"/>
</dbReference>
<dbReference type="PANTHER" id="PTHR38452:SF1">
    <property type="entry name" value="UPF0756 MEMBRANE PROTEIN YEAL"/>
    <property type="match status" value="1"/>
</dbReference>
<dbReference type="Pfam" id="PF04284">
    <property type="entry name" value="DUF441"/>
    <property type="match status" value="1"/>
</dbReference>
<proteinExistence type="inferred from homology"/>
<organism>
    <name type="scientific">Yersinia pseudotuberculosis serotype IB (strain PB1/+)</name>
    <dbReference type="NCBI Taxonomy" id="502801"/>
    <lineage>
        <taxon>Bacteria</taxon>
        <taxon>Pseudomonadati</taxon>
        <taxon>Pseudomonadota</taxon>
        <taxon>Gammaproteobacteria</taxon>
        <taxon>Enterobacterales</taxon>
        <taxon>Yersiniaceae</taxon>
        <taxon>Yersinia</taxon>
    </lineage>
</organism>
<protein>
    <recommendedName>
        <fullName evidence="1">UPF0756 membrane protein YPTS_2884</fullName>
    </recommendedName>
</protein>
<keyword id="KW-1003">Cell membrane</keyword>
<keyword id="KW-0472">Membrane</keyword>
<keyword id="KW-0812">Transmembrane</keyword>
<keyword id="KW-1133">Transmembrane helix</keyword>